<gene>
    <name evidence="1" type="primary">dnaJ</name>
    <name type="ordered locus">Paes_1582</name>
</gene>
<evidence type="ECO:0000255" key="1">
    <source>
        <dbReference type="HAMAP-Rule" id="MF_01152"/>
    </source>
</evidence>
<organism>
    <name type="scientific">Prosthecochloris aestuarii (strain DSM 271 / SK 413)</name>
    <dbReference type="NCBI Taxonomy" id="290512"/>
    <lineage>
        <taxon>Bacteria</taxon>
        <taxon>Pseudomonadati</taxon>
        <taxon>Chlorobiota</taxon>
        <taxon>Chlorobiia</taxon>
        <taxon>Chlorobiales</taxon>
        <taxon>Chlorobiaceae</taxon>
        <taxon>Prosthecochloris</taxon>
    </lineage>
</organism>
<accession>B4S9D0</accession>
<reference key="1">
    <citation type="submission" date="2008-06" db="EMBL/GenBank/DDBJ databases">
        <title>Complete sequence of chromosome of Prosthecochloris aestuarii DSM 271.</title>
        <authorList>
            <consortium name="US DOE Joint Genome Institute"/>
            <person name="Lucas S."/>
            <person name="Copeland A."/>
            <person name="Lapidus A."/>
            <person name="Glavina del Rio T."/>
            <person name="Dalin E."/>
            <person name="Tice H."/>
            <person name="Bruce D."/>
            <person name="Goodwin L."/>
            <person name="Pitluck S."/>
            <person name="Schmutz J."/>
            <person name="Larimer F."/>
            <person name="Land M."/>
            <person name="Hauser L."/>
            <person name="Kyrpides N."/>
            <person name="Anderson I."/>
            <person name="Liu Z."/>
            <person name="Li T."/>
            <person name="Zhao F."/>
            <person name="Overmann J."/>
            <person name="Bryant D.A."/>
            <person name="Richardson P."/>
        </authorList>
    </citation>
    <scope>NUCLEOTIDE SEQUENCE [LARGE SCALE GENOMIC DNA]</scope>
    <source>
        <strain>DSM 271 / SK 413</strain>
    </source>
</reference>
<dbReference type="EMBL" id="CP001108">
    <property type="protein sequence ID" value="ACF46600.1"/>
    <property type="molecule type" value="Genomic_DNA"/>
</dbReference>
<dbReference type="RefSeq" id="WP_012506133.1">
    <property type="nucleotide sequence ID" value="NC_011059.1"/>
</dbReference>
<dbReference type="SMR" id="B4S9D0"/>
<dbReference type="STRING" id="290512.Paes_1582"/>
<dbReference type="KEGG" id="paa:Paes_1582"/>
<dbReference type="eggNOG" id="COG0484">
    <property type="taxonomic scope" value="Bacteria"/>
</dbReference>
<dbReference type="HOGENOM" id="CLU_017633_0_7_10"/>
<dbReference type="Proteomes" id="UP000002725">
    <property type="component" value="Chromosome"/>
</dbReference>
<dbReference type="GO" id="GO:0005737">
    <property type="term" value="C:cytoplasm"/>
    <property type="evidence" value="ECO:0007669"/>
    <property type="project" value="UniProtKB-SubCell"/>
</dbReference>
<dbReference type="GO" id="GO:0005524">
    <property type="term" value="F:ATP binding"/>
    <property type="evidence" value="ECO:0007669"/>
    <property type="project" value="InterPro"/>
</dbReference>
<dbReference type="GO" id="GO:0031072">
    <property type="term" value="F:heat shock protein binding"/>
    <property type="evidence" value="ECO:0007669"/>
    <property type="project" value="InterPro"/>
</dbReference>
<dbReference type="GO" id="GO:0051082">
    <property type="term" value="F:unfolded protein binding"/>
    <property type="evidence" value="ECO:0007669"/>
    <property type="project" value="UniProtKB-UniRule"/>
</dbReference>
<dbReference type="GO" id="GO:0008270">
    <property type="term" value="F:zinc ion binding"/>
    <property type="evidence" value="ECO:0007669"/>
    <property type="project" value="UniProtKB-UniRule"/>
</dbReference>
<dbReference type="GO" id="GO:0051085">
    <property type="term" value="P:chaperone cofactor-dependent protein refolding"/>
    <property type="evidence" value="ECO:0007669"/>
    <property type="project" value="TreeGrafter"/>
</dbReference>
<dbReference type="GO" id="GO:0006260">
    <property type="term" value="P:DNA replication"/>
    <property type="evidence" value="ECO:0007669"/>
    <property type="project" value="UniProtKB-KW"/>
</dbReference>
<dbReference type="GO" id="GO:0042026">
    <property type="term" value="P:protein refolding"/>
    <property type="evidence" value="ECO:0007669"/>
    <property type="project" value="TreeGrafter"/>
</dbReference>
<dbReference type="GO" id="GO:0009408">
    <property type="term" value="P:response to heat"/>
    <property type="evidence" value="ECO:0007669"/>
    <property type="project" value="InterPro"/>
</dbReference>
<dbReference type="CDD" id="cd06257">
    <property type="entry name" value="DnaJ"/>
    <property type="match status" value="1"/>
</dbReference>
<dbReference type="CDD" id="cd10747">
    <property type="entry name" value="DnaJ_C"/>
    <property type="match status" value="1"/>
</dbReference>
<dbReference type="CDD" id="cd10719">
    <property type="entry name" value="DnaJ_zf"/>
    <property type="match status" value="1"/>
</dbReference>
<dbReference type="FunFam" id="1.10.287.110:FF:000034">
    <property type="entry name" value="Chaperone protein DnaJ"/>
    <property type="match status" value="1"/>
</dbReference>
<dbReference type="FunFam" id="2.60.260.20:FF:000005">
    <property type="entry name" value="Chaperone protein dnaJ 1, mitochondrial"/>
    <property type="match status" value="1"/>
</dbReference>
<dbReference type="FunFam" id="2.10.230.10:FF:000002">
    <property type="entry name" value="Molecular chaperone DnaJ"/>
    <property type="match status" value="1"/>
</dbReference>
<dbReference type="Gene3D" id="1.10.287.110">
    <property type="entry name" value="DnaJ domain"/>
    <property type="match status" value="1"/>
</dbReference>
<dbReference type="Gene3D" id="2.10.230.10">
    <property type="entry name" value="Heat shock protein DnaJ, cysteine-rich domain"/>
    <property type="match status" value="1"/>
</dbReference>
<dbReference type="Gene3D" id="2.60.260.20">
    <property type="entry name" value="Urease metallochaperone UreE, N-terminal domain"/>
    <property type="match status" value="2"/>
</dbReference>
<dbReference type="HAMAP" id="MF_01152">
    <property type="entry name" value="DnaJ"/>
    <property type="match status" value="1"/>
</dbReference>
<dbReference type="InterPro" id="IPR012724">
    <property type="entry name" value="DnaJ"/>
</dbReference>
<dbReference type="InterPro" id="IPR002939">
    <property type="entry name" value="DnaJ_C"/>
</dbReference>
<dbReference type="InterPro" id="IPR001623">
    <property type="entry name" value="DnaJ_domain"/>
</dbReference>
<dbReference type="InterPro" id="IPR018253">
    <property type="entry name" value="DnaJ_domain_CS"/>
</dbReference>
<dbReference type="InterPro" id="IPR008971">
    <property type="entry name" value="HSP40/DnaJ_pept-bd"/>
</dbReference>
<dbReference type="InterPro" id="IPR001305">
    <property type="entry name" value="HSP_DnaJ_Cys-rich_dom"/>
</dbReference>
<dbReference type="InterPro" id="IPR036410">
    <property type="entry name" value="HSP_DnaJ_Cys-rich_dom_sf"/>
</dbReference>
<dbReference type="InterPro" id="IPR036869">
    <property type="entry name" value="J_dom_sf"/>
</dbReference>
<dbReference type="NCBIfam" id="TIGR02349">
    <property type="entry name" value="DnaJ_bact"/>
    <property type="match status" value="1"/>
</dbReference>
<dbReference type="NCBIfam" id="NF008035">
    <property type="entry name" value="PRK10767.1"/>
    <property type="match status" value="1"/>
</dbReference>
<dbReference type="NCBIfam" id="NF010874">
    <property type="entry name" value="PRK14281.1"/>
    <property type="match status" value="1"/>
</dbReference>
<dbReference type="PANTHER" id="PTHR43096:SF48">
    <property type="entry name" value="CHAPERONE PROTEIN DNAJ"/>
    <property type="match status" value="1"/>
</dbReference>
<dbReference type="PANTHER" id="PTHR43096">
    <property type="entry name" value="DNAJ HOMOLOG 1, MITOCHONDRIAL-RELATED"/>
    <property type="match status" value="1"/>
</dbReference>
<dbReference type="Pfam" id="PF00226">
    <property type="entry name" value="DnaJ"/>
    <property type="match status" value="1"/>
</dbReference>
<dbReference type="Pfam" id="PF01556">
    <property type="entry name" value="DnaJ_C"/>
    <property type="match status" value="1"/>
</dbReference>
<dbReference type="Pfam" id="PF00684">
    <property type="entry name" value="DnaJ_CXXCXGXG"/>
    <property type="match status" value="1"/>
</dbReference>
<dbReference type="PRINTS" id="PR00625">
    <property type="entry name" value="JDOMAIN"/>
</dbReference>
<dbReference type="SMART" id="SM00271">
    <property type="entry name" value="DnaJ"/>
    <property type="match status" value="1"/>
</dbReference>
<dbReference type="SUPFAM" id="SSF46565">
    <property type="entry name" value="Chaperone J-domain"/>
    <property type="match status" value="1"/>
</dbReference>
<dbReference type="SUPFAM" id="SSF57938">
    <property type="entry name" value="DnaJ/Hsp40 cysteine-rich domain"/>
    <property type="match status" value="1"/>
</dbReference>
<dbReference type="SUPFAM" id="SSF49493">
    <property type="entry name" value="HSP40/DnaJ peptide-binding domain"/>
    <property type="match status" value="2"/>
</dbReference>
<dbReference type="PROSITE" id="PS00636">
    <property type="entry name" value="DNAJ_1"/>
    <property type="match status" value="1"/>
</dbReference>
<dbReference type="PROSITE" id="PS50076">
    <property type="entry name" value="DNAJ_2"/>
    <property type="match status" value="1"/>
</dbReference>
<dbReference type="PROSITE" id="PS51188">
    <property type="entry name" value="ZF_CR"/>
    <property type="match status" value="1"/>
</dbReference>
<proteinExistence type="inferred from homology"/>
<name>DNAJ_PROA2</name>
<protein>
    <recommendedName>
        <fullName evidence="1">Chaperone protein DnaJ</fullName>
    </recommendedName>
</protein>
<keyword id="KW-0143">Chaperone</keyword>
<keyword id="KW-0963">Cytoplasm</keyword>
<keyword id="KW-0235">DNA replication</keyword>
<keyword id="KW-0479">Metal-binding</keyword>
<keyword id="KW-0677">Repeat</keyword>
<keyword id="KW-0346">Stress response</keyword>
<keyword id="KW-0862">Zinc</keyword>
<keyword id="KW-0863">Zinc-finger</keyword>
<feature type="chain" id="PRO_1000137710" description="Chaperone protein DnaJ">
    <location>
        <begin position="1"/>
        <end position="395"/>
    </location>
</feature>
<feature type="domain" description="J" evidence="1">
    <location>
        <begin position="4"/>
        <end position="69"/>
    </location>
</feature>
<feature type="repeat" description="CXXCXGXG motif">
    <location>
        <begin position="165"/>
        <end position="172"/>
    </location>
</feature>
<feature type="repeat" description="CXXCXGXG motif">
    <location>
        <begin position="181"/>
        <end position="188"/>
    </location>
</feature>
<feature type="repeat" description="CXXCXGXG motif">
    <location>
        <begin position="207"/>
        <end position="214"/>
    </location>
</feature>
<feature type="repeat" description="CXXCXGXG motif">
    <location>
        <begin position="221"/>
        <end position="228"/>
    </location>
</feature>
<feature type="zinc finger region" description="CR-type" evidence="1">
    <location>
        <begin position="152"/>
        <end position="233"/>
    </location>
</feature>
<feature type="binding site" evidence="1">
    <location>
        <position position="165"/>
    </location>
    <ligand>
        <name>Zn(2+)</name>
        <dbReference type="ChEBI" id="CHEBI:29105"/>
        <label>1</label>
    </ligand>
</feature>
<feature type="binding site" evidence="1">
    <location>
        <position position="168"/>
    </location>
    <ligand>
        <name>Zn(2+)</name>
        <dbReference type="ChEBI" id="CHEBI:29105"/>
        <label>1</label>
    </ligand>
</feature>
<feature type="binding site" evidence="1">
    <location>
        <position position="181"/>
    </location>
    <ligand>
        <name>Zn(2+)</name>
        <dbReference type="ChEBI" id="CHEBI:29105"/>
        <label>2</label>
    </ligand>
</feature>
<feature type="binding site" evidence="1">
    <location>
        <position position="184"/>
    </location>
    <ligand>
        <name>Zn(2+)</name>
        <dbReference type="ChEBI" id="CHEBI:29105"/>
        <label>2</label>
    </ligand>
</feature>
<feature type="binding site" evidence="1">
    <location>
        <position position="207"/>
    </location>
    <ligand>
        <name>Zn(2+)</name>
        <dbReference type="ChEBI" id="CHEBI:29105"/>
        <label>2</label>
    </ligand>
</feature>
<feature type="binding site" evidence="1">
    <location>
        <position position="210"/>
    </location>
    <ligand>
        <name>Zn(2+)</name>
        <dbReference type="ChEBI" id="CHEBI:29105"/>
        <label>2</label>
    </ligand>
</feature>
<feature type="binding site" evidence="1">
    <location>
        <position position="221"/>
    </location>
    <ligand>
        <name>Zn(2+)</name>
        <dbReference type="ChEBI" id="CHEBI:29105"/>
        <label>1</label>
    </ligand>
</feature>
<feature type="binding site" evidence="1">
    <location>
        <position position="224"/>
    </location>
    <ligand>
        <name>Zn(2+)</name>
        <dbReference type="ChEBI" id="CHEBI:29105"/>
        <label>1</label>
    </ligand>
</feature>
<comment type="function">
    <text evidence="1">Participates actively in the response to hyperosmotic and heat shock by preventing the aggregation of stress-denatured proteins and by disaggregating proteins, also in an autonomous, DnaK-independent fashion. Unfolded proteins bind initially to DnaJ; upon interaction with the DnaJ-bound protein, DnaK hydrolyzes its bound ATP, resulting in the formation of a stable complex. GrpE releases ADP from DnaK; ATP binding to DnaK triggers the release of the substrate protein, thus completing the reaction cycle. Several rounds of ATP-dependent interactions between DnaJ, DnaK and GrpE are required for fully efficient folding. Also involved, together with DnaK and GrpE, in the DNA replication of plasmids through activation of initiation proteins.</text>
</comment>
<comment type="cofactor">
    <cofactor evidence="1">
        <name>Zn(2+)</name>
        <dbReference type="ChEBI" id="CHEBI:29105"/>
    </cofactor>
    <text evidence="1">Binds 2 Zn(2+) ions per monomer.</text>
</comment>
<comment type="subunit">
    <text evidence="1">Homodimer.</text>
</comment>
<comment type="subcellular location">
    <subcellularLocation>
        <location evidence="1">Cytoplasm</location>
    </subcellularLocation>
</comment>
<comment type="domain">
    <text evidence="1">The J domain is necessary and sufficient to stimulate DnaK ATPase activity. Zinc center 1 plays an important role in the autonomous, DnaK-independent chaperone activity of DnaJ. Zinc center 2 is essential for interaction with DnaK and for DnaJ activity.</text>
</comment>
<comment type="similarity">
    <text evidence="1">Belongs to the DnaJ family.</text>
</comment>
<sequence>MKRDYYEVLGVGRSATKDEIKKAYRKLAMKYHPDKNPDNSEAEEKFKEANEAYEVLSNDDKRRRYDQFGHAGVGSSASSQGGPFGGGGTGDLGDIFSAFNDMFGGGARGGGSPFGFEDVFSGGGGRRSRSAGVSGSDLKIRLKLSLEEIAKGVEKTLKIKKQVACDVCNGTGSKTGELETCPTCQGTGEVRQASKTMFGQFVNIAACPTCGGEGRVVKERCTACHGEGIKQGETTVKVNIPAGVEDGNYLTLRGQGNAGPRGGMNGDLIVVIEEVEHKIFARRGDDVVYNLTLSYADMVLGTKVDIPTLEGRVKMTVPPATQPNTVLRISAKGIGHLKAPGRGDHLVRVNVFVPKDPSHQDKELLKELNKSVHMVPDEKKEHEKGFYEKVKDIFS</sequence>